<proteinExistence type="inferred from homology"/>
<keyword id="KW-0687">Ribonucleoprotein</keyword>
<keyword id="KW-0689">Ribosomal protein</keyword>
<keyword id="KW-0694">RNA-binding</keyword>
<keyword id="KW-0699">rRNA-binding</keyword>
<reference key="1">
    <citation type="submission" date="2009-04" db="EMBL/GenBank/DDBJ databases">
        <title>Genome sequence of Bacillus anthracis A0248.</title>
        <authorList>
            <person name="Dodson R.J."/>
            <person name="Munk A.C."/>
            <person name="Bruce D."/>
            <person name="Detter C."/>
            <person name="Tapia R."/>
            <person name="Sutton G."/>
            <person name="Sims D."/>
            <person name="Brettin T."/>
        </authorList>
    </citation>
    <scope>NUCLEOTIDE SEQUENCE [LARGE SCALE GENOMIC DNA]</scope>
    <source>
        <strain>A0248</strain>
    </source>
</reference>
<accession>C3P9R5</accession>
<comment type="function">
    <text evidence="1">Binds to 23S rRNA. Forms part of two intersubunit bridges in the 70S ribosome.</text>
</comment>
<comment type="subunit">
    <text evidence="1">Part of the 50S ribosomal subunit. Forms a cluster with proteins L3 and L19. In the 70S ribosome, L14 and L19 interact and together make contacts with the 16S rRNA in bridges B5 and B8.</text>
</comment>
<comment type="similarity">
    <text evidence="1">Belongs to the universal ribosomal protein uL14 family.</text>
</comment>
<evidence type="ECO:0000255" key="1">
    <source>
        <dbReference type="HAMAP-Rule" id="MF_01367"/>
    </source>
</evidence>
<evidence type="ECO:0000305" key="2"/>
<feature type="chain" id="PRO_1000166895" description="Large ribosomal subunit protein uL14">
    <location>
        <begin position="1"/>
        <end position="122"/>
    </location>
</feature>
<name>RL14_BACAA</name>
<sequence>MIQQESRLKVADNSGARELLTIKVLGGSGRKYANIGDIIVATVKQATPGGVVKKGDVVKAVVVRTKSGARRPDGSYIKFDENAAVIIKDDKSPRGTRIFGPVARELRDSNFMKIVSLAPEVL</sequence>
<protein>
    <recommendedName>
        <fullName evidence="1">Large ribosomal subunit protein uL14</fullName>
    </recommendedName>
    <alternativeName>
        <fullName evidence="2">50S ribosomal protein L14</fullName>
    </alternativeName>
</protein>
<dbReference type="EMBL" id="CP001598">
    <property type="protein sequence ID" value="ACQ48932.1"/>
    <property type="molecule type" value="Genomic_DNA"/>
</dbReference>
<dbReference type="RefSeq" id="WP_000615912.1">
    <property type="nucleotide sequence ID" value="NC_012659.1"/>
</dbReference>
<dbReference type="SMR" id="C3P9R5"/>
<dbReference type="GeneID" id="93010933"/>
<dbReference type="KEGG" id="bai:BAA_0136"/>
<dbReference type="HOGENOM" id="CLU_095071_2_1_9"/>
<dbReference type="GO" id="GO:0022625">
    <property type="term" value="C:cytosolic large ribosomal subunit"/>
    <property type="evidence" value="ECO:0007669"/>
    <property type="project" value="TreeGrafter"/>
</dbReference>
<dbReference type="GO" id="GO:0070180">
    <property type="term" value="F:large ribosomal subunit rRNA binding"/>
    <property type="evidence" value="ECO:0007669"/>
    <property type="project" value="TreeGrafter"/>
</dbReference>
<dbReference type="GO" id="GO:0003735">
    <property type="term" value="F:structural constituent of ribosome"/>
    <property type="evidence" value="ECO:0007669"/>
    <property type="project" value="InterPro"/>
</dbReference>
<dbReference type="GO" id="GO:0006412">
    <property type="term" value="P:translation"/>
    <property type="evidence" value="ECO:0007669"/>
    <property type="project" value="UniProtKB-UniRule"/>
</dbReference>
<dbReference type="CDD" id="cd00337">
    <property type="entry name" value="Ribosomal_uL14"/>
    <property type="match status" value="1"/>
</dbReference>
<dbReference type="FunFam" id="2.40.150.20:FF:000001">
    <property type="entry name" value="50S ribosomal protein L14"/>
    <property type="match status" value="1"/>
</dbReference>
<dbReference type="Gene3D" id="2.40.150.20">
    <property type="entry name" value="Ribosomal protein L14"/>
    <property type="match status" value="1"/>
</dbReference>
<dbReference type="HAMAP" id="MF_01367">
    <property type="entry name" value="Ribosomal_uL14"/>
    <property type="match status" value="1"/>
</dbReference>
<dbReference type="InterPro" id="IPR000218">
    <property type="entry name" value="Ribosomal_uL14"/>
</dbReference>
<dbReference type="InterPro" id="IPR005745">
    <property type="entry name" value="Ribosomal_uL14_bac-type"/>
</dbReference>
<dbReference type="InterPro" id="IPR019972">
    <property type="entry name" value="Ribosomal_uL14_CS"/>
</dbReference>
<dbReference type="InterPro" id="IPR036853">
    <property type="entry name" value="Ribosomal_uL14_sf"/>
</dbReference>
<dbReference type="NCBIfam" id="TIGR01067">
    <property type="entry name" value="rplN_bact"/>
    <property type="match status" value="1"/>
</dbReference>
<dbReference type="PANTHER" id="PTHR11761">
    <property type="entry name" value="50S/60S RIBOSOMAL PROTEIN L14/L23"/>
    <property type="match status" value="1"/>
</dbReference>
<dbReference type="PANTHER" id="PTHR11761:SF3">
    <property type="entry name" value="LARGE RIBOSOMAL SUBUNIT PROTEIN UL14M"/>
    <property type="match status" value="1"/>
</dbReference>
<dbReference type="Pfam" id="PF00238">
    <property type="entry name" value="Ribosomal_L14"/>
    <property type="match status" value="1"/>
</dbReference>
<dbReference type="SMART" id="SM01374">
    <property type="entry name" value="Ribosomal_L14"/>
    <property type="match status" value="1"/>
</dbReference>
<dbReference type="SUPFAM" id="SSF50193">
    <property type="entry name" value="Ribosomal protein L14"/>
    <property type="match status" value="1"/>
</dbReference>
<dbReference type="PROSITE" id="PS00049">
    <property type="entry name" value="RIBOSOMAL_L14"/>
    <property type="match status" value="1"/>
</dbReference>
<organism>
    <name type="scientific">Bacillus anthracis (strain A0248)</name>
    <dbReference type="NCBI Taxonomy" id="592021"/>
    <lineage>
        <taxon>Bacteria</taxon>
        <taxon>Bacillati</taxon>
        <taxon>Bacillota</taxon>
        <taxon>Bacilli</taxon>
        <taxon>Bacillales</taxon>
        <taxon>Bacillaceae</taxon>
        <taxon>Bacillus</taxon>
        <taxon>Bacillus cereus group</taxon>
    </lineage>
</organism>
<gene>
    <name evidence="1" type="primary">rplN</name>
    <name type="ordered locus">BAA_0136</name>
</gene>